<evidence type="ECO:0000250" key="1">
    <source>
        <dbReference type="UniProtKB" id="P46883"/>
    </source>
</evidence>
<evidence type="ECO:0000250" key="2">
    <source>
        <dbReference type="UniProtKB" id="Q43077"/>
    </source>
</evidence>
<evidence type="ECO:0000256" key="3">
    <source>
        <dbReference type="SAM" id="MobiDB-lite"/>
    </source>
</evidence>
<evidence type="ECO:0000269" key="4">
    <source>
    </source>
</evidence>
<evidence type="ECO:0000269" key="5">
    <source>
    </source>
</evidence>
<evidence type="ECO:0000269" key="6">
    <source>
    </source>
</evidence>
<evidence type="ECO:0000305" key="7"/>
<evidence type="ECO:0000305" key="8">
    <source>
    </source>
</evidence>
<evidence type="ECO:0007744" key="9">
    <source>
        <dbReference type="PDB" id="1A2V"/>
    </source>
</evidence>
<evidence type="ECO:0007744" key="10">
    <source>
        <dbReference type="PDB" id="1EKM"/>
    </source>
</evidence>
<evidence type="ECO:0007744" key="11">
    <source>
        <dbReference type="PDB" id="2OOV"/>
    </source>
</evidence>
<evidence type="ECO:0007744" key="12">
    <source>
        <dbReference type="PDB" id="2OQE"/>
    </source>
</evidence>
<evidence type="ECO:0007744" key="13">
    <source>
        <dbReference type="PDB" id="3N9H"/>
    </source>
</evidence>
<evidence type="ECO:0007744" key="14">
    <source>
        <dbReference type="PDB" id="3NBB"/>
    </source>
</evidence>
<evidence type="ECO:0007744" key="15">
    <source>
        <dbReference type="PDB" id="3NBJ"/>
    </source>
</evidence>
<evidence type="ECO:0007744" key="16">
    <source>
        <dbReference type="PDB" id="3SX1"/>
    </source>
</evidence>
<evidence type="ECO:0007744" key="17">
    <source>
        <dbReference type="PDB" id="3SXX"/>
    </source>
</evidence>
<evidence type="ECO:0007744" key="18">
    <source>
        <dbReference type="PDB" id="3T0U"/>
    </source>
</evidence>
<evidence type="ECO:0007744" key="19">
    <source>
        <dbReference type="PDB" id="4EV2"/>
    </source>
</evidence>
<evidence type="ECO:0007744" key="20">
    <source>
        <dbReference type="PDB" id="4EV5"/>
    </source>
</evidence>
<evidence type="ECO:0007744" key="21">
    <source>
        <dbReference type="PDB" id="4KFD"/>
    </source>
</evidence>
<evidence type="ECO:0007744" key="22">
    <source>
        <dbReference type="PDB" id="4KFE"/>
    </source>
</evidence>
<evidence type="ECO:0007744" key="23">
    <source>
        <dbReference type="PDB" id="4KFF"/>
    </source>
</evidence>
<evidence type="ECO:0007829" key="24">
    <source>
        <dbReference type="PDB" id="3N9H"/>
    </source>
</evidence>
<evidence type="ECO:0007829" key="25">
    <source>
        <dbReference type="PDB" id="3SXX"/>
    </source>
</evidence>
<evidence type="ECO:0007829" key="26">
    <source>
        <dbReference type="PDB" id="4EV5"/>
    </source>
</evidence>
<comment type="catalytic activity">
    <reaction evidence="5 6">
        <text>a primary methyl amine + O2 + H2O = an aldehyde + H2O2 + NH4(+)</text>
        <dbReference type="Rhea" id="RHEA:16153"/>
        <dbReference type="ChEBI" id="CHEBI:15377"/>
        <dbReference type="ChEBI" id="CHEBI:15379"/>
        <dbReference type="ChEBI" id="CHEBI:16240"/>
        <dbReference type="ChEBI" id="CHEBI:17478"/>
        <dbReference type="ChEBI" id="CHEBI:28938"/>
        <dbReference type="ChEBI" id="CHEBI:228804"/>
        <dbReference type="EC" id="1.4.3.21"/>
    </reaction>
</comment>
<comment type="cofactor">
    <cofactor evidence="5 6">
        <name>Cu cation</name>
        <dbReference type="ChEBI" id="CHEBI:23378"/>
    </cofactor>
    <cofactor evidence="4">
        <name>Zn(2+)</name>
        <dbReference type="ChEBI" id="CHEBI:29105"/>
    </cofactor>
    <text evidence="4 5 6">Binds 1 copper ion per subunit. Can also use zinc ion as cofactor (PubMed:10933787).</text>
</comment>
<comment type="cofactor">
    <cofactor evidence="5 6">
        <name>L-topaquinone</name>
        <dbReference type="ChEBI" id="CHEBI:79027"/>
    </cofactor>
    <text evidence="5 6">Contains 1 topaquinone per subunit.</text>
</comment>
<comment type="cofactor">
    <cofactor evidence="2">
        <name>Mn(2+)</name>
        <dbReference type="ChEBI" id="CHEBI:29035"/>
    </cofactor>
    <text evidence="2">Binds 1 Mn(2+) ion per subunit.</text>
</comment>
<comment type="subunit">
    <text evidence="4 5 6">Homodimer.</text>
</comment>
<comment type="subcellular location">
    <subcellularLocation>
        <location evidence="8">Peroxisome</location>
    </subcellularLocation>
</comment>
<comment type="induction">
    <text>By methylamine.</text>
</comment>
<comment type="PTM">
    <text evidence="4 6">Topaquinone (TPQ) is generated by copper-dependent autoxidation of a specific tyrosyl residue.</text>
</comment>
<comment type="similarity">
    <text evidence="7">Belongs to the copper/topaquinone oxidase family.</text>
</comment>
<keyword id="KW-0002">3D-structure</keyword>
<keyword id="KW-0186">Copper</keyword>
<keyword id="KW-0903">Direct protein sequencing</keyword>
<keyword id="KW-1015">Disulfide bond</keyword>
<keyword id="KW-0325">Glycoprotein</keyword>
<keyword id="KW-0464">Manganese</keyword>
<keyword id="KW-0479">Metal-binding</keyword>
<keyword id="KW-0560">Oxidoreductase</keyword>
<keyword id="KW-0576">Peroxisome</keyword>
<keyword id="KW-0801">TPQ</keyword>
<accession>P12807</accession>
<proteinExistence type="evidence at protein level"/>
<organism>
    <name type="scientific">Pichia angusta</name>
    <name type="common">Yeast</name>
    <name type="synonym">Hansenula polymorpha</name>
    <dbReference type="NCBI Taxonomy" id="870730"/>
    <lineage>
        <taxon>Eukaryota</taxon>
        <taxon>Fungi</taxon>
        <taxon>Dikarya</taxon>
        <taxon>Ascomycota</taxon>
        <taxon>Saccharomycotina</taxon>
        <taxon>Pichiomycetes</taxon>
        <taxon>Pichiales</taxon>
        <taxon>Pichiaceae</taxon>
        <taxon>Ogataea</taxon>
    </lineage>
</organism>
<feature type="chain" id="PRO_0000064106" description="Peroxisomal primary amine oxidase">
    <location>
        <begin position="1"/>
        <end position="692"/>
    </location>
</feature>
<feature type="region of interest" description="Disordered" evidence="3">
    <location>
        <begin position="1"/>
        <end position="26"/>
    </location>
</feature>
<feature type="compositionally biased region" description="Low complexity" evidence="3">
    <location>
        <begin position="1"/>
        <end position="22"/>
    </location>
</feature>
<feature type="active site" description="Proton acceptor" evidence="6">
    <location>
        <position position="319"/>
    </location>
</feature>
<feature type="active site" description="Schiff-base intermediate with substrate; via topaquinone" evidence="4 6 10 14 15 18 23">
    <location>
        <position position="405"/>
    </location>
</feature>
<feature type="binding site" evidence="19 20">
    <location>
        <begin position="317"/>
        <end position="328"/>
    </location>
    <ligand>
        <name>substrate</name>
    </ligand>
</feature>
<feature type="binding site" evidence="1">
    <location>
        <begin position="402"/>
        <end position="407"/>
    </location>
    <ligand>
        <name>substrate</name>
    </ligand>
</feature>
<feature type="binding site" evidence="4 6 9 10 11 12 13 14 15 18 19 20 21 22 23">
    <location>
        <position position="456"/>
    </location>
    <ligand>
        <name>Cu cation</name>
        <dbReference type="ChEBI" id="CHEBI:23378"/>
    </ligand>
</feature>
<feature type="binding site" evidence="4 6 9 10 11 12 13 14 15 18 19 20 21 22 23">
    <location>
        <position position="458"/>
    </location>
    <ligand>
        <name>Cu cation</name>
        <dbReference type="ChEBI" id="CHEBI:23378"/>
    </ligand>
</feature>
<feature type="binding site" evidence="2">
    <location>
        <position position="465"/>
    </location>
    <ligand>
        <name>Mn(2+)</name>
        <dbReference type="ChEBI" id="CHEBI:29035"/>
    </ligand>
</feature>
<feature type="binding site" evidence="2">
    <location>
        <position position="613"/>
    </location>
    <ligand>
        <name>Mn(2+)</name>
        <dbReference type="ChEBI" id="CHEBI:29035"/>
    </ligand>
</feature>
<feature type="binding site" evidence="2">
    <location>
        <position position="614"/>
    </location>
    <ligand>
        <name>Mn(2+)</name>
        <dbReference type="ChEBI" id="CHEBI:29035"/>
    </ligand>
</feature>
<feature type="binding site" evidence="4 6 9 10 11 12 13 14 15 18 19 20 21 22 23">
    <location>
        <position position="624"/>
    </location>
    <ligand>
        <name>Cu cation</name>
        <dbReference type="ChEBI" id="CHEBI:23378"/>
    </ligand>
</feature>
<feature type="modified residue" description="2',4',5'-topaquinone" evidence="6 9 12">
    <location>
        <position position="405"/>
    </location>
</feature>
<feature type="glycosylation site" description="N-linked (GlcNAc...) asparagine" evidence="6">
    <location>
        <position position="243"/>
    </location>
</feature>
<feature type="disulfide bond" evidence="4 6 9 10 11 12 13 14 15 16 17 18 19 20 21 22 23">
    <location>
        <begin position="338"/>
        <end position="364"/>
    </location>
</feature>
<feature type="mutagenesis site" description="Strongly reduced activity." evidence="6">
    <original>D</original>
    <variation>E</variation>
    <location>
        <position position="319"/>
    </location>
</feature>
<feature type="mutagenesis site" description="Loss of activity." evidence="6">
    <original>D</original>
    <variation>N</variation>
    <location>
        <position position="319"/>
    </location>
</feature>
<feature type="helix" evidence="25">
    <location>
        <begin position="30"/>
        <end position="43"/>
    </location>
</feature>
<feature type="turn" evidence="25">
    <location>
        <begin position="44"/>
        <end position="46"/>
    </location>
</feature>
<feature type="strand" evidence="25">
    <location>
        <begin position="49"/>
        <end position="57"/>
    </location>
</feature>
<feature type="helix" evidence="25">
    <location>
        <begin position="61"/>
        <end position="69"/>
    </location>
</feature>
<feature type="strand" evidence="25">
    <location>
        <begin position="78"/>
        <end position="85"/>
    </location>
</feature>
<feature type="strand" evidence="25">
    <location>
        <begin position="89"/>
        <end position="97"/>
    </location>
</feature>
<feature type="turn" evidence="25">
    <location>
        <begin position="98"/>
        <end position="101"/>
    </location>
</feature>
<feature type="strand" evidence="25">
    <location>
        <begin position="102"/>
        <end position="109"/>
    </location>
</feature>
<feature type="helix" evidence="25">
    <location>
        <begin position="118"/>
        <end position="122"/>
    </location>
</feature>
<feature type="helix" evidence="25">
    <location>
        <begin position="124"/>
        <end position="130"/>
    </location>
</feature>
<feature type="helix" evidence="25">
    <location>
        <begin position="132"/>
        <end position="140"/>
    </location>
</feature>
<feature type="helix" evidence="25">
    <location>
        <begin position="145"/>
        <end position="150"/>
    </location>
</feature>
<feature type="strand" evidence="25">
    <location>
        <begin position="151"/>
        <end position="157"/>
    </location>
</feature>
<feature type="turn" evidence="25">
    <location>
        <begin position="162"/>
        <end position="166"/>
    </location>
</feature>
<feature type="strand" evidence="25">
    <location>
        <begin position="170"/>
        <end position="177"/>
    </location>
</feature>
<feature type="helix" evidence="25">
    <location>
        <begin position="185"/>
        <end position="187"/>
    </location>
</feature>
<feature type="strand" evidence="25">
    <location>
        <begin position="193"/>
        <end position="197"/>
    </location>
</feature>
<feature type="turn" evidence="25">
    <location>
        <begin position="198"/>
        <end position="201"/>
    </location>
</feature>
<feature type="strand" evidence="25">
    <location>
        <begin position="202"/>
        <end position="207"/>
    </location>
</feature>
<feature type="helix" evidence="25">
    <location>
        <begin position="225"/>
        <end position="232"/>
    </location>
</feature>
<feature type="strand" evidence="25">
    <location>
        <begin position="243"/>
        <end position="245"/>
    </location>
</feature>
<feature type="strand" evidence="25">
    <location>
        <begin position="253"/>
        <end position="255"/>
    </location>
</feature>
<feature type="strand" evidence="25">
    <location>
        <begin position="258"/>
        <end position="261"/>
    </location>
</feature>
<feature type="strand" evidence="25">
    <location>
        <begin position="264"/>
        <end position="271"/>
    </location>
</feature>
<feature type="turn" evidence="25">
    <location>
        <begin position="272"/>
        <end position="274"/>
    </location>
</feature>
<feature type="strand" evidence="25">
    <location>
        <begin position="275"/>
        <end position="285"/>
    </location>
</feature>
<feature type="strand" evidence="25">
    <location>
        <begin position="288"/>
        <end position="305"/>
    </location>
</feature>
<feature type="helix" evidence="25">
    <location>
        <begin position="312"/>
        <end position="314"/>
    </location>
</feature>
<feature type="helix" evidence="25">
    <location>
        <begin position="319"/>
        <end position="322"/>
    </location>
</feature>
<feature type="turn" evidence="25">
    <location>
        <begin position="325"/>
        <end position="328"/>
    </location>
</feature>
<feature type="turn" evidence="25">
    <location>
        <begin position="333"/>
        <end position="337"/>
    </location>
</feature>
<feature type="strand" evidence="25">
    <location>
        <begin position="343"/>
        <end position="350"/>
    </location>
</feature>
<feature type="strand" evidence="25">
    <location>
        <begin position="356"/>
        <end position="377"/>
    </location>
</feature>
<feature type="helix" evidence="25">
    <location>
        <begin position="379"/>
        <end position="381"/>
    </location>
</feature>
<feature type="strand" evidence="25">
    <location>
        <begin position="385"/>
        <end position="402"/>
    </location>
</feature>
<feature type="strand" evidence="25">
    <location>
        <begin position="405"/>
        <end position="413"/>
    </location>
</feature>
<feature type="strand" evidence="25">
    <location>
        <begin position="419"/>
        <end position="427"/>
    </location>
</feature>
<feature type="strand" evidence="24">
    <location>
        <begin position="431"/>
        <end position="433"/>
    </location>
</feature>
<feature type="turn" evidence="25">
    <location>
        <begin position="441"/>
        <end position="443"/>
    </location>
</feature>
<feature type="strand" evidence="25">
    <location>
        <begin position="444"/>
        <end position="448"/>
    </location>
</feature>
<feature type="strand" evidence="25">
    <location>
        <begin position="451"/>
        <end position="454"/>
    </location>
</feature>
<feature type="strand" evidence="25">
    <location>
        <begin position="456"/>
        <end position="466"/>
    </location>
</feature>
<feature type="strand" evidence="25">
    <location>
        <begin position="473"/>
        <end position="482"/>
    </location>
</feature>
<feature type="helix" evidence="26">
    <location>
        <begin position="490"/>
        <end position="492"/>
    </location>
</feature>
<feature type="strand" evidence="25">
    <location>
        <begin position="498"/>
        <end position="504"/>
    </location>
</feature>
<feature type="helix" evidence="25">
    <location>
        <begin position="508"/>
        <end position="511"/>
    </location>
</feature>
<feature type="helix" evidence="25">
    <location>
        <begin position="517"/>
        <end position="519"/>
    </location>
</feature>
<feature type="strand" evidence="25">
    <location>
        <begin position="522"/>
        <end position="526"/>
    </location>
</feature>
<feature type="turn" evidence="25">
    <location>
        <begin position="533"/>
        <end position="535"/>
    </location>
</feature>
<feature type="strand" evidence="25">
    <location>
        <begin position="540"/>
        <end position="544"/>
    </location>
</feature>
<feature type="helix" evidence="25">
    <location>
        <begin position="558"/>
        <end position="562"/>
    </location>
</feature>
<feature type="helix" evidence="25">
    <location>
        <begin position="564"/>
        <end position="567"/>
    </location>
</feature>
<feature type="strand" evidence="25">
    <location>
        <begin position="568"/>
        <end position="574"/>
    </location>
</feature>
<feature type="helix" evidence="25">
    <location>
        <begin position="597"/>
        <end position="602"/>
    </location>
</feature>
<feature type="strand" evidence="25">
    <location>
        <begin position="610"/>
        <end position="612"/>
    </location>
</feature>
<feature type="strand" evidence="25">
    <location>
        <begin position="614"/>
        <end position="624"/>
    </location>
</feature>
<feature type="helix" evidence="25">
    <location>
        <begin position="628"/>
        <end position="630"/>
    </location>
</feature>
<feature type="strand" evidence="25">
    <location>
        <begin position="631"/>
        <end position="633"/>
    </location>
</feature>
<feature type="strand" evidence="25">
    <location>
        <begin position="637"/>
        <end position="651"/>
    </location>
</feature>
<feature type="turn" evidence="25">
    <location>
        <begin position="653"/>
        <end position="656"/>
    </location>
</feature>
<feature type="strand" evidence="25">
    <location>
        <begin position="660"/>
        <end position="663"/>
    </location>
</feature>
<feature type="helix" evidence="25">
    <location>
        <begin position="665"/>
        <end position="671"/>
    </location>
</feature>
<protein>
    <recommendedName>
        <fullName>Peroxisomal primary amine oxidase</fullName>
        <ecNumber evidence="5 6">1.4.3.21</ecNumber>
    </recommendedName>
    <alternativeName>
        <fullName>Copper amine oxidase</fullName>
    </alternativeName>
    <alternativeName>
        <fullName>Methylamine oxidase</fullName>
    </alternativeName>
</protein>
<reference key="1">
    <citation type="journal article" date="1989" name="Biochim. Biophys. Acta">
        <title>Cloning and sequencing of the peroxisomal amine oxidase gene from Hansenula polymorpha.</title>
        <authorList>
            <person name="Bruinenberg P.G."/>
            <person name="Evers M."/>
            <person name="Waterham H.R."/>
            <person name="Kuipers J."/>
            <person name="Arnberg A.C."/>
            <person name="Ab G."/>
        </authorList>
    </citation>
    <scope>NUCLEOTIDE SEQUENCE [GENOMIC DNA]</scope>
    <source>
        <strain>ATCC 34438 / CBS 4732 / DSM 70277 / JCM 3621 / NBRC 1476 / NRRL Y-5445</strain>
    </source>
</reference>
<reference key="2">
    <citation type="journal article" date="1995" name="FEBS Lett.">
        <title>Limited proteolysis of Hansenula polymorpha yeast amine oxidase: isolation of a C-terminal fragment containing both a copper and quino-cofactor.</title>
        <authorList>
            <person name="Plastino J."/>
            <person name="Klinman J.P."/>
        </authorList>
    </citation>
    <scope>PROTEIN SEQUENCE OF 231-238</scope>
    <scope>COFACTOR</scope>
    <scope>SUBUNIT</scope>
    <scope>CATALYTIC ACTIVITY</scope>
</reference>
<reference key="3">
    <citation type="journal article" date="1998" name="Structure">
        <title>Copper amine oxidase from Hansenula polymorpha: the crystal structure determined at 2.4-A resolution reveals the active conformation.</title>
        <authorList>
            <person name="Li R."/>
            <person name="Klinman J.P."/>
            <person name="Mathews F.S."/>
        </authorList>
    </citation>
    <scope>X-RAY CRYSTALLOGRAPHY (2.4 ANGSTROMS) IN COMPLEX WITH COPPER IONS</scope>
    <scope>TOPAQUINONE AT TYR-405</scope>
    <scope>GLYCOSYLATION AT ASN-243</scope>
    <scope>MUTAGENESIS OF ASP-319</scope>
    <scope>SUBUNIT</scope>
    <scope>CATALYTIC ACTIVITY</scope>
    <scope>ACTIVE SITE</scope>
    <scope>DISULFIDE BOND</scope>
</reference>
<reference key="4">
    <citation type="journal article" date="2000" name="Biochemistry">
        <title>Crystal structure at 2.5 A resolution of zinc-substituted copper amine oxidase of Hansenula polymorpha expressed in Escherichia coli.</title>
        <authorList>
            <person name="Chen Z.-W."/>
            <person name="Schwartz B."/>
            <person name="Williams N.K."/>
            <person name="Li R."/>
            <person name="Klinman J.P."/>
            <person name="Mathews F.S."/>
        </authorList>
    </citation>
    <scope>X-RAY CRYSTALLOGRAPHY (2.5 ANGSTROMS) OF 17-672 IN COMPLEX WITH ZINC IONS</scope>
    <scope>ACTIVE SITE</scope>
    <scope>DISULFIDE BOND</scope>
</reference>
<sequence length="692" mass="77534">MERLRQIASQATAASAAPARPAHPLDPLSTAEIKAATNTVKSYFAGKKISFNTVTLREPARKAYIQWKEQGGPLPPRLAYYVILEAGKPGVKEGLVDLASLSVIETRALETVQPILTVEDLCSTEEVIRNDPAVIEQCVLSGIPANEMHKVYCDPWTIGYDERWGTGKRLQQALVYYRSDEDDSQYSHPLDFCPIVDTEEKKVIFIDIPNRRRKVSKHKHANFYPKHMIEKVGAMRPEAPPINVTQPEGVSFKMTGNVMEWSNFKFHIGFNYREGIVLSDVSYNDHGNVRPIFHRISLSEMIVPYGSPEFPHQRKHALDIGEYGAGYMTNPLSLGCDCKGVIHYLDAHFSDRAGDPITVKNAVCIHEEDDGLLFKHSDFRDNFATSLVTRATKLVVSQIFTAANYEYCLYWVFMQDGAIRLDIRLTGILNTYILGDDEEAGPWGTRVYPNVNAHNHQHLFSLRIDPRIDGDGNSAAACDAKSSPYPLGSPENMYGNAFYSEKTTFKTVKDSLTNYESATGRSWDIFNPNKVNPYSGKPPSYKLVSTQCPPLLAKEGSLVAKRAPWASHSVNVVPYKDNRLYPSGDHVPQWSGDGVRGMREWIGDGSENIDNTDILFFHTFGITHFPAPEDFPLMPAEPITLMLRPRHFFTENPGLDIQPSYAMTTSEAKRAVHKETKDKTSRLAFEGSCCGK</sequence>
<dbReference type="EC" id="1.4.3.21" evidence="5 6"/>
<dbReference type="EMBL" id="X15111">
    <property type="protein sequence ID" value="CAA33209.1"/>
    <property type="molecule type" value="Genomic_DNA"/>
</dbReference>
<dbReference type="PIR" id="S04963">
    <property type="entry name" value="S04963"/>
</dbReference>
<dbReference type="PDB" id="1A2V">
    <property type="method" value="X-ray"/>
    <property type="resolution" value="2.40 A"/>
    <property type="chains" value="A/B/C/D/E/F=18-672"/>
</dbReference>
<dbReference type="PDB" id="1EKM">
    <property type="method" value="X-ray"/>
    <property type="resolution" value="2.50 A"/>
    <property type="chains" value="A/B/C=17-672"/>
</dbReference>
<dbReference type="PDB" id="2OOV">
    <property type="method" value="X-ray"/>
    <property type="resolution" value="1.70 A"/>
    <property type="chains" value="A/B/C/D/E/F=13-672"/>
</dbReference>
<dbReference type="PDB" id="2OQE">
    <property type="method" value="X-ray"/>
    <property type="resolution" value="1.60 A"/>
    <property type="chains" value="A/B/C/D/E/F=13-672"/>
</dbReference>
<dbReference type="PDB" id="3N9H">
    <property type="method" value="X-ray"/>
    <property type="resolution" value="2.50 A"/>
    <property type="chains" value="A/B/C/D/E/F=1-692"/>
</dbReference>
<dbReference type="PDB" id="3NBB">
    <property type="method" value="X-ray"/>
    <property type="resolution" value="2.05 A"/>
    <property type="chains" value="A/B/C/D/E/F=1-692"/>
</dbReference>
<dbReference type="PDB" id="3NBJ">
    <property type="method" value="X-ray"/>
    <property type="resolution" value="1.90 A"/>
    <property type="chains" value="A/B/C/D/E/F=1-692"/>
</dbReference>
<dbReference type="PDB" id="3SX1">
    <property type="method" value="X-ray"/>
    <property type="resolution" value="1.73 A"/>
    <property type="chains" value="A/B/C=1-692"/>
</dbReference>
<dbReference type="PDB" id="3SXX">
    <property type="method" value="X-ray"/>
    <property type="resolution" value="1.27 A"/>
    <property type="chains" value="A/B/C/D/E/F=1-692"/>
</dbReference>
<dbReference type="PDB" id="3T0U">
    <property type="method" value="X-ray"/>
    <property type="resolution" value="1.90 A"/>
    <property type="chains" value="A/B/C=1-692"/>
</dbReference>
<dbReference type="PDB" id="4EV2">
    <property type="method" value="X-ray"/>
    <property type="resolution" value="2.18 A"/>
    <property type="chains" value="A/B/C/D/E/F=1-692"/>
</dbReference>
<dbReference type="PDB" id="4EV5">
    <property type="method" value="X-ray"/>
    <property type="resolution" value="2.25 A"/>
    <property type="chains" value="A/B/C/D/E/F=1-692"/>
</dbReference>
<dbReference type="PDB" id="4KFD">
    <property type="method" value="X-ray"/>
    <property type="resolution" value="1.69 A"/>
    <property type="chains" value="A/B/C/D/E/F=1-692"/>
</dbReference>
<dbReference type="PDB" id="4KFE">
    <property type="method" value="X-ray"/>
    <property type="resolution" value="2.10 A"/>
    <property type="chains" value="A/B/C/D/E/F=1-692"/>
</dbReference>
<dbReference type="PDB" id="4KFF">
    <property type="method" value="X-ray"/>
    <property type="resolution" value="2.15 A"/>
    <property type="chains" value="A/B/C=1-692"/>
</dbReference>
<dbReference type="PDBsum" id="1A2V"/>
<dbReference type="PDBsum" id="1EKM"/>
<dbReference type="PDBsum" id="2OOV"/>
<dbReference type="PDBsum" id="2OQE"/>
<dbReference type="PDBsum" id="3N9H"/>
<dbReference type="PDBsum" id="3NBB"/>
<dbReference type="PDBsum" id="3NBJ"/>
<dbReference type="PDBsum" id="3SX1"/>
<dbReference type="PDBsum" id="3SXX"/>
<dbReference type="PDBsum" id="3T0U"/>
<dbReference type="PDBsum" id="4EV2"/>
<dbReference type="PDBsum" id="4EV5"/>
<dbReference type="PDBsum" id="4KFD"/>
<dbReference type="PDBsum" id="4KFE"/>
<dbReference type="PDBsum" id="4KFF"/>
<dbReference type="SMR" id="P12807"/>
<dbReference type="BindingDB" id="P12807"/>
<dbReference type="ChEMBL" id="CHEMBL5020"/>
<dbReference type="GlyCosmos" id="P12807">
    <property type="glycosylation" value="1 site, No reported glycans"/>
</dbReference>
<dbReference type="iPTMnet" id="P12807"/>
<dbReference type="BRENDA" id="1.4.3.21">
    <property type="organism ID" value="2587"/>
</dbReference>
<dbReference type="EvolutionaryTrace" id="P12807"/>
<dbReference type="GO" id="GO:0005777">
    <property type="term" value="C:peroxisome"/>
    <property type="evidence" value="ECO:0007669"/>
    <property type="project" value="UniProtKB-SubCell"/>
</dbReference>
<dbReference type="GO" id="GO:0005507">
    <property type="term" value="F:copper ion binding"/>
    <property type="evidence" value="ECO:0007669"/>
    <property type="project" value="InterPro"/>
</dbReference>
<dbReference type="GO" id="GO:0008131">
    <property type="term" value="F:primary methylamine oxidase activity"/>
    <property type="evidence" value="ECO:0007669"/>
    <property type="project" value="UniProtKB-EC"/>
</dbReference>
<dbReference type="GO" id="GO:0048038">
    <property type="term" value="F:quinone binding"/>
    <property type="evidence" value="ECO:0007669"/>
    <property type="project" value="InterPro"/>
</dbReference>
<dbReference type="GO" id="GO:0009308">
    <property type="term" value="P:amine metabolic process"/>
    <property type="evidence" value="ECO:0007669"/>
    <property type="project" value="InterPro"/>
</dbReference>
<dbReference type="FunFam" id="2.70.98.20:FF:000001">
    <property type="entry name" value="Amine oxidase"/>
    <property type="match status" value="1"/>
</dbReference>
<dbReference type="FunFam" id="3.10.450.40:FF:000014">
    <property type="entry name" value="Peroxisomal primary amine oxidase"/>
    <property type="match status" value="1"/>
</dbReference>
<dbReference type="Gene3D" id="3.10.450.40">
    <property type="match status" value="2"/>
</dbReference>
<dbReference type="Gene3D" id="2.70.98.20">
    <property type="entry name" value="Copper amine oxidase, catalytic domain"/>
    <property type="match status" value="1"/>
</dbReference>
<dbReference type="InterPro" id="IPR049947">
    <property type="entry name" value="Cu_Am_Ox_Cu-bd"/>
</dbReference>
<dbReference type="InterPro" id="IPR049948">
    <property type="entry name" value="Cu_Am_ox_TPQ-bd"/>
</dbReference>
<dbReference type="InterPro" id="IPR000269">
    <property type="entry name" value="Cu_amine_oxidase"/>
</dbReference>
<dbReference type="InterPro" id="IPR015798">
    <property type="entry name" value="Cu_amine_oxidase_C"/>
</dbReference>
<dbReference type="InterPro" id="IPR036460">
    <property type="entry name" value="Cu_amine_oxidase_C_sf"/>
</dbReference>
<dbReference type="InterPro" id="IPR016182">
    <property type="entry name" value="Cu_amine_oxidase_N-reg"/>
</dbReference>
<dbReference type="InterPro" id="IPR015800">
    <property type="entry name" value="Cu_amine_oxidase_N2"/>
</dbReference>
<dbReference type="InterPro" id="IPR015802">
    <property type="entry name" value="Cu_amine_oxidase_N3"/>
</dbReference>
<dbReference type="PANTHER" id="PTHR10638">
    <property type="entry name" value="COPPER AMINE OXIDASE"/>
    <property type="match status" value="1"/>
</dbReference>
<dbReference type="PANTHER" id="PTHR10638:SF86">
    <property type="entry name" value="COPPER AMINE OXIDASE 1-RELATED"/>
    <property type="match status" value="1"/>
</dbReference>
<dbReference type="Pfam" id="PF01179">
    <property type="entry name" value="Cu_amine_oxid"/>
    <property type="match status" value="1"/>
</dbReference>
<dbReference type="Pfam" id="PF02727">
    <property type="entry name" value="Cu_amine_oxidN2"/>
    <property type="match status" value="1"/>
</dbReference>
<dbReference type="Pfam" id="PF02728">
    <property type="entry name" value="Cu_amine_oxidN3"/>
    <property type="match status" value="1"/>
</dbReference>
<dbReference type="SUPFAM" id="SSF49998">
    <property type="entry name" value="Amine oxidase catalytic domain"/>
    <property type="match status" value="1"/>
</dbReference>
<dbReference type="SUPFAM" id="SSF54416">
    <property type="entry name" value="Amine oxidase N-terminal region"/>
    <property type="match status" value="2"/>
</dbReference>
<dbReference type="PROSITE" id="PS01164">
    <property type="entry name" value="COPPER_AMINE_OXID_1"/>
    <property type="match status" value="1"/>
</dbReference>
<dbReference type="PROSITE" id="PS01165">
    <property type="entry name" value="COPPER_AMINE_OXID_2"/>
    <property type="match status" value="1"/>
</dbReference>
<name>AMO_PICAN</name>
<gene>
    <name type="primary">AMO</name>
</gene>